<gene>
    <name type="primary">Adh1</name>
    <name type="synonym">Adh-1</name>
</gene>
<comment type="catalytic activity">
    <reaction>
        <text>a primary alcohol + NAD(+) = an aldehyde + NADH + H(+)</text>
        <dbReference type="Rhea" id="RHEA:10736"/>
        <dbReference type="ChEBI" id="CHEBI:15378"/>
        <dbReference type="ChEBI" id="CHEBI:15734"/>
        <dbReference type="ChEBI" id="CHEBI:17478"/>
        <dbReference type="ChEBI" id="CHEBI:57540"/>
        <dbReference type="ChEBI" id="CHEBI:57945"/>
        <dbReference type="EC" id="1.1.1.1"/>
    </reaction>
</comment>
<comment type="catalytic activity">
    <reaction>
        <text>a secondary alcohol + NAD(+) = a ketone + NADH + H(+)</text>
        <dbReference type="Rhea" id="RHEA:10740"/>
        <dbReference type="ChEBI" id="CHEBI:15378"/>
        <dbReference type="ChEBI" id="CHEBI:17087"/>
        <dbReference type="ChEBI" id="CHEBI:35681"/>
        <dbReference type="ChEBI" id="CHEBI:57540"/>
        <dbReference type="ChEBI" id="CHEBI:57945"/>
        <dbReference type="EC" id="1.1.1.1"/>
    </reaction>
</comment>
<comment type="cofactor">
    <cofactor>
        <name>Zn(2+)</name>
        <dbReference type="ChEBI" id="CHEBI:29105"/>
    </cofactor>
    <text>Binds 2 Zn(2+) ions per subunit.</text>
</comment>
<comment type="subunit">
    <text>Dimer of identical or non-identical chains of three types (A, B, C), which are coded by 3 separate genes at different loci.</text>
</comment>
<comment type="subcellular location">
    <subcellularLocation>
        <location>Cytoplasm</location>
    </subcellularLocation>
</comment>
<comment type="similarity">
    <text evidence="4">Belongs to the zinc-containing alcohol dehydrogenase family. Class-I subfamily.</text>
</comment>
<dbReference type="EC" id="1.1.1.1"/>
<dbReference type="EMBL" id="M29523">
    <property type="protein sequence ID" value="AAA85462.1"/>
    <property type="molecule type" value="Genomic_DNA"/>
</dbReference>
<dbReference type="EMBL" id="M29516">
    <property type="protein sequence ID" value="AAA85462.1"/>
    <property type="status" value="JOINED"/>
    <property type="molecule type" value="Genomic_DNA"/>
</dbReference>
<dbReference type="EMBL" id="M29517">
    <property type="protein sequence ID" value="AAA85462.1"/>
    <property type="status" value="JOINED"/>
    <property type="molecule type" value="Genomic_DNA"/>
</dbReference>
<dbReference type="EMBL" id="M29518">
    <property type="protein sequence ID" value="AAA85462.1"/>
    <property type="status" value="JOINED"/>
    <property type="molecule type" value="Genomic_DNA"/>
</dbReference>
<dbReference type="EMBL" id="M29519">
    <property type="protein sequence ID" value="AAA85462.1"/>
    <property type="status" value="JOINED"/>
    <property type="molecule type" value="Genomic_DNA"/>
</dbReference>
<dbReference type="EMBL" id="M29520">
    <property type="protein sequence ID" value="AAA85462.1"/>
    <property type="status" value="JOINED"/>
    <property type="molecule type" value="Genomic_DNA"/>
</dbReference>
<dbReference type="EMBL" id="M29521">
    <property type="protein sequence ID" value="AAA85462.1"/>
    <property type="status" value="JOINED"/>
    <property type="molecule type" value="Genomic_DNA"/>
</dbReference>
<dbReference type="EMBL" id="M29522">
    <property type="protein sequence ID" value="AAA85462.1"/>
    <property type="status" value="JOINED"/>
    <property type="molecule type" value="Genomic_DNA"/>
</dbReference>
<dbReference type="EMBL" id="M15327">
    <property type="protein sequence ID" value="AAA40681.1"/>
    <property type="molecule type" value="mRNA"/>
</dbReference>
<dbReference type="EMBL" id="BC062403">
    <property type="protein sequence ID" value="AAH62403.1"/>
    <property type="molecule type" value="mRNA"/>
</dbReference>
<dbReference type="PIR" id="A26468">
    <property type="entry name" value="A26468"/>
</dbReference>
<dbReference type="RefSeq" id="NP_062159.3">
    <property type="nucleotide sequence ID" value="NM_019286.4"/>
</dbReference>
<dbReference type="SMR" id="P06757"/>
<dbReference type="FunCoup" id="P06757">
    <property type="interactions" value="176"/>
</dbReference>
<dbReference type="STRING" id="10116.ENSRNOP00000069797"/>
<dbReference type="ChEMBL" id="CHEMBL4862"/>
<dbReference type="GlyGen" id="P06757">
    <property type="glycosylation" value="1 site"/>
</dbReference>
<dbReference type="iPTMnet" id="P06757"/>
<dbReference type="PhosphoSitePlus" id="P06757"/>
<dbReference type="jPOST" id="P06757"/>
<dbReference type="PaxDb" id="10116-ENSRNOP00000016346"/>
<dbReference type="Ensembl" id="ENSRNOT00000085067.2">
    <property type="protein sequence ID" value="ENSRNOP00000069797.2"/>
    <property type="gene ID" value="ENSRNOG00000012436.7"/>
</dbReference>
<dbReference type="GeneID" id="24172"/>
<dbReference type="KEGG" id="rno:24172"/>
<dbReference type="AGR" id="RGD:2044"/>
<dbReference type="CTD" id="126"/>
<dbReference type="RGD" id="2044">
    <property type="gene designation" value="Adh1"/>
</dbReference>
<dbReference type="eggNOG" id="KOG0022">
    <property type="taxonomic scope" value="Eukaryota"/>
</dbReference>
<dbReference type="GeneTree" id="ENSGT00940000155234"/>
<dbReference type="HOGENOM" id="CLU_026673_14_0_1"/>
<dbReference type="InParanoid" id="P06757"/>
<dbReference type="OMA" id="YIFAVEP"/>
<dbReference type="OrthoDB" id="24296at9989"/>
<dbReference type="PhylomeDB" id="P06757"/>
<dbReference type="Reactome" id="R-RNO-2161541">
    <property type="pathway name" value="Abacavir metabolism"/>
</dbReference>
<dbReference type="Reactome" id="R-RNO-5365859">
    <property type="pathway name" value="RA biosynthesis pathway"/>
</dbReference>
<dbReference type="Reactome" id="R-RNO-71384">
    <property type="pathway name" value="Ethanol oxidation"/>
</dbReference>
<dbReference type="SABIO-RK" id="P06757"/>
<dbReference type="PRO" id="PR:P06757"/>
<dbReference type="Proteomes" id="UP000002494">
    <property type="component" value="Chromosome 2"/>
</dbReference>
<dbReference type="Bgee" id="ENSRNOG00000012436">
    <property type="expression patterns" value="Expressed in liver and 19 other cell types or tissues"/>
</dbReference>
<dbReference type="ExpressionAtlas" id="P06757">
    <property type="expression patterns" value="baseline and differential"/>
</dbReference>
<dbReference type="GO" id="GO:0005829">
    <property type="term" value="C:cytosol"/>
    <property type="evidence" value="ECO:0000318"/>
    <property type="project" value="GO_Central"/>
</dbReference>
<dbReference type="GO" id="GO:0005739">
    <property type="term" value="C:mitochondrion"/>
    <property type="evidence" value="ECO:0000266"/>
    <property type="project" value="RGD"/>
</dbReference>
<dbReference type="GO" id="GO:0004022">
    <property type="term" value="F:alcohol dehydrogenase (NAD+) activity"/>
    <property type="evidence" value="ECO:0000314"/>
    <property type="project" value="RGD"/>
</dbReference>
<dbReference type="GO" id="GO:0004745">
    <property type="term" value="F:all-trans-retinol dehydrogenase (NAD+) activity"/>
    <property type="evidence" value="ECO:0000314"/>
    <property type="project" value="RGD"/>
</dbReference>
<dbReference type="GO" id="GO:0042802">
    <property type="term" value="F:identical protein binding"/>
    <property type="evidence" value="ECO:0000266"/>
    <property type="project" value="RGD"/>
</dbReference>
<dbReference type="GO" id="GO:0008270">
    <property type="term" value="F:zinc ion binding"/>
    <property type="evidence" value="ECO:0000318"/>
    <property type="project" value="GO_Central"/>
</dbReference>
<dbReference type="GO" id="GO:0031100">
    <property type="term" value="P:animal organ regeneration"/>
    <property type="evidence" value="ECO:0000270"/>
    <property type="project" value="RGD"/>
</dbReference>
<dbReference type="GO" id="GO:0048149">
    <property type="term" value="P:behavioral response to ethanol"/>
    <property type="evidence" value="ECO:0000266"/>
    <property type="project" value="RGD"/>
</dbReference>
<dbReference type="GO" id="GO:0006068">
    <property type="term" value="P:ethanol catabolic process"/>
    <property type="evidence" value="ECO:0000266"/>
    <property type="project" value="RGD"/>
</dbReference>
<dbReference type="GO" id="GO:0006629">
    <property type="term" value="P:lipid metabolic process"/>
    <property type="evidence" value="ECO:0000314"/>
    <property type="project" value="RGD"/>
</dbReference>
<dbReference type="GO" id="GO:0045471">
    <property type="term" value="P:response to ethanol"/>
    <property type="evidence" value="ECO:0000270"/>
    <property type="project" value="RGD"/>
</dbReference>
<dbReference type="GO" id="GO:0032570">
    <property type="term" value="P:response to progesterone"/>
    <property type="evidence" value="ECO:0000270"/>
    <property type="project" value="RGD"/>
</dbReference>
<dbReference type="GO" id="GO:0032526">
    <property type="term" value="P:response to retinoic acid"/>
    <property type="evidence" value="ECO:0000266"/>
    <property type="project" value="RGD"/>
</dbReference>
<dbReference type="GO" id="GO:0048545">
    <property type="term" value="P:response to steroid hormone"/>
    <property type="evidence" value="ECO:0000266"/>
    <property type="project" value="RGD"/>
</dbReference>
<dbReference type="GO" id="GO:0033574">
    <property type="term" value="P:response to testosterone"/>
    <property type="evidence" value="ECO:0000266"/>
    <property type="project" value="RGD"/>
</dbReference>
<dbReference type="GO" id="GO:0042573">
    <property type="term" value="P:retinoic acid metabolic process"/>
    <property type="evidence" value="ECO:0000266"/>
    <property type="project" value="RGD"/>
</dbReference>
<dbReference type="GO" id="GO:0001523">
    <property type="term" value="P:retinoid metabolic process"/>
    <property type="evidence" value="ECO:0000266"/>
    <property type="project" value="RGD"/>
</dbReference>
<dbReference type="GO" id="GO:0042572">
    <property type="term" value="P:retinol metabolic process"/>
    <property type="evidence" value="ECO:0000266"/>
    <property type="project" value="RGD"/>
</dbReference>
<dbReference type="CDD" id="cd08299">
    <property type="entry name" value="alcohol_DH_class_I_II_IV"/>
    <property type="match status" value="1"/>
</dbReference>
<dbReference type="FunFam" id="3.40.50.720:FF:000003">
    <property type="entry name" value="S-(hydroxymethyl)glutathione dehydrogenase"/>
    <property type="match status" value="1"/>
</dbReference>
<dbReference type="FunFam" id="3.90.180.10:FF:000001">
    <property type="entry name" value="S-(hydroxymethyl)glutathione dehydrogenase"/>
    <property type="match status" value="1"/>
</dbReference>
<dbReference type="Gene3D" id="3.90.180.10">
    <property type="entry name" value="Medium-chain alcohol dehydrogenases, catalytic domain"/>
    <property type="match status" value="1"/>
</dbReference>
<dbReference type="Gene3D" id="3.40.50.720">
    <property type="entry name" value="NAD(P)-binding Rossmann-like Domain"/>
    <property type="match status" value="1"/>
</dbReference>
<dbReference type="InterPro" id="IPR013149">
    <property type="entry name" value="ADH-like_C"/>
</dbReference>
<dbReference type="InterPro" id="IPR013154">
    <property type="entry name" value="ADH-like_N"/>
</dbReference>
<dbReference type="InterPro" id="IPR002328">
    <property type="entry name" value="ADH_Zn_CS"/>
</dbReference>
<dbReference type="InterPro" id="IPR011032">
    <property type="entry name" value="GroES-like_sf"/>
</dbReference>
<dbReference type="InterPro" id="IPR036291">
    <property type="entry name" value="NAD(P)-bd_dom_sf"/>
</dbReference>
<dbReference type="InterPro" id="IPR020843">
    <property type="entry name" value="PKS_ER"/>
</dbReference>
<dbReference type="PANTHER" id="PTHR43880">
    <property type="entry name" value="ALCOHOL DEHYDROGENASE"/>
    <property type="match status" value="1"/>
</dbReference>
<dbReference type="PANTHER" id="PTHR43880:SF1">
    <property type="entry name" value="ALCOHOL DEHYDROGENASE 1A"/>
    <property type="match status" value="1"/>
</dbReference>
<dbReference type="Pfam" id="PF08240">
    <property type="entry name" value="ADH_N"/>
    <property type="match status" value="1"/>
</dbReference>
<dbReference type="Pfam" id="PF00107">
    <property type="entry name" value="ADH_zinc_N"/>
    <property type="match status" value="1"/>
</dbReference>
<dbReference type="SMART" id="SM00829">
    <property type="entry name" value="PKS_ER"/>
    <property type="match status" value="1"/>
</dbReference>
<dbReference type="SUPFAM" id="SSF50129">
    <property type="entry name" value="GroES-like"/>
    <property type="match status" value="2"/>
</dbReference>
<dbReference type="SUPFAM" id="SSF51735">
    <property type="entry name" value="NAD(P)-binding Rossmann-fold domains"/>
    <property type="match status" value="1"/>
</dbReference>
<dbReference type="PROSITE" id="PS00059">
    <property type="entry name" value="ADH_ZINC"/>
    <property type="match status" value="1"/>
</dbReference>
<reference key="1">
    <citation type="journal article" date="1986" name="Gene">
        <title>Complete amino acid sequence of rat liver alcohol dehydrogenase deduced from the cDNA sequence.</title>
        <authorList>
            <person name="Crabb D.W."/>
            <person name="Edenberg H.J."/>
        </authorList>
    </citation>
    <scope>NUCLEOTIDE SEQUENCE [MRNA]</scope>
    <source>
        <tissue>Liver</tissue>
    </source>
</reference>
<reference key="2">
    <citation type="journal article" date="1989" name="Genomics">
        <title>Structure and expression of the rat class I alcohol dehydrogenase gene.</title>
        <authorList>
            <person name="Crabb D.W."/>
            <person name="Stein P.M."/>
            <person name="Dipple K.M."/>
            <person name="Hittle J.B."/>
            <person name="Sidhu R."/>
            <person name="Qulali M."/>
            <person name="Zhang K."/>
            <person name="Edenberg H.J."/>
        </authorList>
    </citation>
    <scope>NUCLEOTIDE SEQUENCE</scope>
</reference>
<reference key="3">
    <citation type="journal article" date="2004" name="Genome Res.">
        <title>The status, quality, and expansion of the NIH full-length cDNA project: the Mammalian Gene Collection (MGC).</title>
        <authorList>
            <consortium name="The MGC Project Team"/>
        </authorList>
    </citation>
    <scope>NUCLEOTIDE SEQUENCE [LARGE SCALE MRNA]</scope>
    <source>
        <tissue>Prostate</tissue>
    </source>
</reference>
<reference key="4">
    <citation type="journal article" date="1972" name="Eur. J. Biochem.">
        <title>Structural studies of alcohol dehydrogenase from rat liver.</title>
        <authorList>
            <person name="Joernvall H."/>
            <person name="Markovic O."/>
        </authorList>
    </citation>
    <scope>ACETYLATION AT SER-2</scope>
</reference>
<accession>P06757</accession>
<sequence length="376" mass="39645">MSTAGKVIKCKAAVLWEPHKPFTIEDIEVAPPKAHEVRIKMVATGVCRSDDHAVSGSLFTPLPAVLGHEGAGIVESIGEGVTCVKPGDKVIPLFSPQCGKCRICKHPESNLCCQTKNLTQPKGALLDGTSRFSCRGKPIHHFISTSTFSQYTVVDDIAVAKIDAAAPLDKVCLIGCGFSTGYGSAVQVAKVTPGSTCAVFGLGGVGLSVVIGCKTAGAAKIIAVDINKDKFAKAKELGATDCINPQDYTKPIQEVLQEMTDGGVDFSFEVIGRLDTMTSALLSCHSACGVSVIVGVPPSAQSLSVNPMSLLLGRTWKGAIFGGFKSKDAVPKLVADFMAKKFPLEPLITHVLPFEKINEAFDLLRAGKSIRTVLTF</sequence>
<proteinExistence type="evidence at protein level"/>
<name>ADH1_RAT</name>
<organism>
    <name type="scientific">Rattus norvegicus</name>
    <name type="common">Rat</name>
    <dbReference type="NCBI Taxonomy" id="10116"/>
    <lineage>
        <taxon>Eukaryota</taxon>
        <taxon>Metazoa</taxon>
        <taxon>Chordata</taxon>
        <taxon>Craniata</taxon>
        <taxon>Vertebrata</taxon>
        <taxon>Euteleostomi</taxon>
        <taxon>Mammalia</taxon>
        <taxon>Eutheria</taxon>
        <taxon>Euarchontoglires</taxon>
        <taxon>Glires</taxon>
        <taxon>Rodentia</taxon>
        <taxon>Myomorpha</taxon>
        <taxon>Muroidea</taxon>
        <taxon>Muridae</taxon>
        <taxon>Murinae</taxon>
        <taxon>Rattus</taxon>
    </lineage>
</organism>
<feature type="initiator methionine" description="Removed" evidence="3">
    <location>
        <position position="1"/>
    </location>
</feature>
<feature type="chain" id="PRO_0000160669" description="Alcohol dehydrogenase 1">
    <location>
        <begin position="2"/>
        <end position="376"/>
    </location>
</feature>
<feature type="binding site">
    <location>
        <position position="47"/>
    </location>
    <ligand>
        <name>Zn(2+)</name>
        <dbReference type="ChEBI" id="CHEBI:29105"/>
        <label>1</label>
        <note>catalytic</note>
    </ligand>
</feature>
<feature type="binding site">
    <location>
        <position position="68"/>
    </location>
    <ligand>
        <name>Zn(2+)</name>
        <dbReference type="ChEBI" id="CHEBI:29105"/>
        <label>1</label>
        <note>catalytic</note>
    </ligand>
</feature>
<feature type="binding site">
    <location>
        <position position="98"/>
    </location>
    <ligand>
        <name>Zn(2+)</name>
        <dbReference type="ChEBI" id="CHEBI:29105"/>
        <label>2</label>
    </ligand>
</feature>
<feature type="binding site">
    <location>
        <position position="101"/>
    </location>
    <ligand>
        <name>Zn(2+)</name>
        <dbReference type="ChEBI" id="CHEBI:29105"/>
        <label>2</label>
    </ligand>
</feature>
<feature type="binding site">
    <location>
        <position position="104"/>
    </location>
    <ligand>
        <name>Zn(2+)</name>
        <dbReference type="ChEBI" id="CHEBI:29105"/>
        <label>2</label>
    </ligand>
</feature>
<feature type="binding site">
    <location>
        <position position="112"/>
    </location>
    <ligand>
        <name>Zn(2+)</name>
        <dbReference type="ChEBI" id="CHEBI:29105"/>
        <label>2</label>
    </ligand>
</feature>
<feature type="binding site">
    <location>
        <position position="176"/>
    </location>
    <ligand>
        <name>Zn(2+)</name>
        <dbReference type="ChEBI" id="CHEBI:29105"/>
        <label>1</label>
        <note>catalytic</note>
    </ligand>
</feature>
<feature type="binding site" evidence="1">
    <location>
        <begin position="201"/>
        <end position="206"/>
    </location>
    <ligand>
        <name>NAD(+)</name>
        <dbReference type="ChEBI" id="CHEBI:57540"/>
    </ligand>
</feature>
<feature type="binding site" evidence="1">
    <location>
        <position position="225"/>
    </location>
    <ligand>
        <name>NAD(+)</name>
        <dbReference type="ChEBI" id="CHEBI:57540"/>
    </ligand>
</feature>
<feature type="binding site" evidence="1">
    <location>
        <position position="230"/>
    </location>
    <ligand>
        <name>NAD(+)</name>
        <dbReference type="ChEBI" id="CHEBI:57540"/>
    </ligand>
</feature>
<feature type="binding site" evidence="1">
    <location>
        <begin position="294"/>
        <end position="296"/>
    </location>
    <ligand>
        <name>NAD(+)</name>
        <dbReference type="ChEBI" id="CHEBI:57540"/>
    </ligand>
</feature>
<feature type="binding site" evidence="1">
    <location>
        <position position="371"/>
    </location>
    <ligand>
        <name>NAD(+)</name>
        <dbReference type="ChEBI" id="CHEBI:57540"/>
    </ligand>
</feature>
<feature type="modified residue" description="N-acetylserine" evidence="3">
    <location>
        <position position="2"/>
    </location>
</feature>
<feature type="modified residue" description="N6-succinyllysine" evidence="2">
    <location>
        <position position="235"/>
    </location>
</feature>
<feature type="modified residue" description="N6-succinyllysine" evidence="2">
    <location>
        <position position="341"/>
    </location>
</feature>
<feature type="sequence conflict" description="In Ref. 1; AAA40681." evidence="4" ref="1">
    <original>I</original>
    <variation>L</variation>
    <location>
        <position position="143"/>
    </location>
</feature>
<evidence type="ECO:0000250" key="1"/>
<evidence type="ECO:0000250" key="2">
    <source>
        <dbReference type="UniProtKB" id="P00329"/>
    </source>
</evidence>
<evidence type="ECO:0000269" key="3">
    <source>
    </source>
</evidence>
<evidence type="ECO:0000305" key="4"/>
<keyword id="KW-0007">Acetylation</keyword>
<keyword id="KW-0963">Cytoplasm</keyword>
<keyword id="KW-0479">Metal-binding</keyword>
<keyword id="KW-0520">NAD</keyword>
<keyword id="KW-0560">Oxidoreductase</keyword>
<keyword id="KW-1185">Reference proteome</keyword>
<keyword id="KW-0862">Zinc</keyword>
<protein>
    <recommendedName>
        <fullName>Alcohol dehydrogenase 1</fullName>
        <ecNumber>1.1.1.1</ecNumber>
    </recommendedName>
    <alternativeName>
        <fullName>Alcohol dehydrogenase A subunit</fullName>
    </alternativeName>
</protein>